<organism>
    <name type="scientific">Homo sapiens</name>
    <name type="common">Human</name>
    <dbReference type="NCBI Taxonomy" id="9606"/>
    <lineage>
        <taxon>Eukaryota</taxon>
        <taxon>Metazoa</taxon>
        <taxon>Chordata</taxon>
        <taxon>Craniata</taxon>
        <taxon>Vertebrata</taxon>
        <taxon>Euteleostomi</taxon>
        <taxon>Mammalia</taxon>
        <taxon>Eutheria</taxon>
        <taxon>Euarchontoglires</taxon>
        <taxon>Primates</taxon>
        <taxon>Haplorrhini</taxon>
        <taxon>Catarrhini</taxon>
        <taxon>Hominidae</taxon>
        <taxon>Homo</taxon>
    </lineage>
</organism>
<reference key="1">
    <citation type="journal article" date="1997" name="Genomics">
        <title>The three human trefoil genes TFF1, TFF2, and TFF3 are located within a region of 55 kb on chromosome 21q22.3.</title>
        <authorList>
            <person name="Seib T."/>
            <person name="Blin N."/>
            <person name="Hilgert K."/>
            <person name="Seifert M."/>
            <person name="Theisinger B."/>
            <person name="Engel M."/>
            <person name="Dooley S."/>
            <person name="Zang K.D."/>
            <person name="Welter C."/>
        </authorList>
    </citation>
    <scope>NUCLEOTIDE SEQUENCE [GENOMIC DNA]</scope>
</reference>
<reference key="2">
    <citation type="journal article" date="2000" name="Genomics">
        <title>Refined localization of autosomal recessive nonsyndromic deafness DFNB10 locus using 34 novel microsatellite markers, genomic structure, and exclusion of six known genes in the region.</title>
        <authorList>
            <person name="Berry A."/>
            <person name="Scott H.S."/>
            <person name="Kudoh J."/>
            <person name="Talior I."/>
            <person name="Korostishevsky M."/>
            <person name="Wattenhofer M."/>
            <person name="Guipponi M."/>
            <person name="Barras C."/>
            <person name="Rossier C."/>
            <person name="Shibuya K."/>
            <person name="Wang J."/>
            <person name="Kawasaki K."/>
            <person name="Asakawa S."/>
            <person name="Minoshima S."/>
            <person name="Shimizu N."/>
            <person name="Antonarakis S.E."/>
            <person name="Bonne-Tamir B."/>
        </authorList>
    </citation>
    <scope>NUCLEOTIDE SEQUENCE [GENOMIC DNA]</scope>
</reference>
<reference key="3">
    <citation type="journal article" date="2000" name="Nature">
        <title>The DNA sequence of human chromosome 21.</title>
        <authorList>
            <person name="Hattori M."/>
            <person name="Fujiyama A."/>
            <person name="Taylor T.D."/>
            <person name="Watanabe H."/>
            <person name="Yada T."/>
            <person name="Park H.-S."/>
            <person name="Toyoda A."/>
            <person name="Ishii K."/>
            <person name="Totoki Y."/>
            <person name="Choi D.-K."/>
            <person name="Groner Y."/>
            <person name="Soeda E."/>
            <person name="Ohki M."/>
            <person name="Takagi T."/>
            <person name="Sakaki Y."/>
            <person name="Taudien S."/>
            <person name="Blechschmidt K."/>
            <person name="Polley A."/>
            <person name="Menzel U."/>
            <person name="Delabar J."/>
            <person name="Kumpf K."/>
            <person name="Lehmann R."/>
            <person name="Patterson D."/>
            <person name="Reichwald K."/>
            <person name="Rump A."/>
            <person name="Schillhabel M."/>
            <person name="Schudy A."/>
            <person name="Zimmermann W."/>
            <person name="Rosenthal A."/>
            <person name="Kudoh J."/>
            <person name="Shibuya K."/>
            <person name="Kawasaki K."/>
            <person name="Asakawa S."/>
            <person name="Shintani A."/>
            <person name="Sasaki T."/>
            <person name="Nagamine K."/>
            <person name="Mitsuyama S."/>
            <person name="Antonarakis S.E."/>
            <person name="Minoshima S."/>
            <person name="Shimizu N."/>
            <person name="Nordsiek G."/>
            <person name="Hornischer K."/>
            <person name="Brandt P."/>
            <person name="Scharfe M."/>
            <person name="Schoen O."/>
            <person name="Desario A."/>
            <person name="Reichelt J."/>
            <person name="Kauer G."/>
            <person name="Bloecker H."/>
            <person name="Ramser J."/>
            <person name="Beck A."/>
            <person name="Klages S."/>
            <person name="Hennig S."/>
            <person name="Riesselmann L."/>
            <person name="Dagand E."/>
            <person name="Wehrmeyer S."/>
            <person name="Borzym K."/>
            <person name="Gardiner K."/>
            <person name="Nizetic D."/>
            <person name="Francis F."/>
            <person name="Lehrach H."/>
            <person name="Reinhardt R."/>
            <person name="Yaspo M.-L."/>
        </authorList>
    </citation>
    <scope>NUCLEOTIDE SEQUENCE [LARGE SCALE GENOMIC DNA]</scope>
</reference>
<reference key="4">
    <citation type="journal article" date="2003" name="Gene">
        <title>mRNA 5' region sequence incompleteness: a potential source of systematic errors in translation initiation codon assignment in human mRNAs.</title>
        <authorList>
            <person name="Casadei R."/>
            <person name="Strippoli P."/>
            <person name="D'Addabbo P."/>
            <person name="Canaider S."/>
            <person name="Lenzi L."/>
            <person name="Vitale L."/>
            <person name="Giannone S."/>
            <person name="Frabetti F."/>
            <person name="Facchin F."/>
            <person name="Carinci P."/>
            <person name="Zannotti M."/>
        </authorList>
    </citation>
    <scope>NUCLEOTIDE SEQUENCE [MRNA] OF 1-51</scope>
    <source>
        <tissue>Heart</tissue>
    </source>
</reference>
<reference key="5">
    <citation type="journal article" date="1993" name="Proc. Natl. Acad. Sci. U.S.A.">
        <title>hP1.B, a human P-domain peptide homologous with rat intestinal trefoil factor, is expressed also in the ulcer-associated cell lineage and the uterus.</title>
        <authorList>
            <person name="Hauser F."/>
            <person name="Poulsom R."/>
            <person name="Chinery R."/>
            <person name="Rogers L.A."/>
            <person name="Hanby A.M."/>
            <person name="Wright N.A."/>
            <person name="Hoffmann W."/>
        </authorList>
    </citation>
    <scope>NUCLEOTIDE SEQUENCE [MRNA]</scope>
    <scope>TISSUE SPECIFICITY</scope>
    <source>
        <tissue>Small intestine</tissue>
    </source>
</reference>
<reference key="6">
    <citation type="journal article" date="2004" name="Genome Res.">
        <title>The status, quality, and expansion of the NIH full-length cDNA project: the Mammalian Gene Collection (MGC).</title>
        <authorList>
            <consortium name="The MGC Project Team"/>
        </authorList>
    </citation>
    <scope>NUCLEOTIDE SEQUENCE [LARGE SCALE MRNA]</scope>
    <source>
        <tissue>Lung</tissue>
    </source>
</reference>
<reference key="7">
    <citation type="journal article" date="1993" name="J. Biol. Chem.">
        <title>Identification of human intestinal trefoil factor. Goblet cell-specific expression of a peptide targeted for apical secretion.</title>
        <authorList>
            <person name="Podolsky D.K."/>
            <person name="Lynch-Devaney K."/>
            <person name="Stow J.L."/>
            <person name="Oates P."/>
            <person name="Murgue B."/>
            <person name="Debeaumont M."/>
            <person name="Sands B.E."/>
            <person name="Mahida Y.R."/>
        </authorList>
    </citation>
    <scope>NUCLEOTIDE SEQUENCE [MRNA]</scope>
    <scope>SUBCELLULAR LOCATION</scope>
    <scope>TISSUE SPECIFICITY</scope>
    <source>
        <tissue>Colon</tissue>
    </source>
</reference>
<reference key="8">
    <citation type="journal article" date="1993" name="J. Biol. Chem.">
        <authorList>
            <person name="Podolsky D.K."/>
            <person name="Lynch-Devaney K."/>
            <person name="Stow J.L."/>
            <person name="Oates P."/>
            <person name="Murgue B."/>
            <person name="De-Beaumont M."/>
            <person name="Sands B.E."/>
            <person name="Mahida Y.R."/>
        </authorList>
    </citation>
    <scope>ERRATUM OF PUBMED:8454642</scope>
</reference>
<reference key="9">
    <citation type="journal article" date="2004" name="Protein Sci.">
        <title>Signal peptide prediction based on analysis of experimentally verified cleavage sites.</title>
        <authorList>
            <person name="Zhang Z."/>
            <person name="Henzel W.J."/>
        </authorList>
    </citation>
    <scope>PROTEIN SEQUENCE OF 22-36</scope>
</reference>
<reference key="10">
    <citation type="journal article" date="2009" name="J. Proteome Res.">
        <title>Comprehensive proteomic analysis of human endometrial fluid aspirate.</title>
        <authorList>
            <person name="Casado-Vela J."/>
            <person name="Rodriguez-Suarez E."/>
            <person name="Iloro I."/>
            <person name="Ametzazurra A."/>
            <person name="Alkorta N."/>
            <person name="Garcia-Velasco J.A."/>
            <person name="Matorras R."/>
            <person name="Prieto B."/>
            <person name="Gonzalez S."/>
            <person name="Nagore D."/>
            <person name="Simon L."/>
            <person name="Elortza F."/>
        </authorList>
    </citation>
    <scope>PROTEIN SEQUENCE OF 22-37</scope>
    <scope>IDENTIFICATION BY MASS SPECTROMETRY</scope>
</reference>
<reference key="11">
    <citation type="journal article" date="2000" name="Horm. Metab. Res.">
        <title>Coexistence of intestinal trefoil factor (hITF) and oxytocin in magnocellular neurons in the human hypothalamus.</title>
        <authorList>
            <person name="Griepentrog T."/>
            <person name="Bauer M."/>
            <person name="Hornstein C."/>
            <person name="Sauer H."/>
            <person name="Jirikowski G.F."/>
        </authorList>
    </citation>
    <scope>SUBCELLULAR LOCATION</scope>
    <scope>TISSUE SPECIFICITY</scope>
</reference>
<reference key="12">
    <citation type="journal article" date="2001" name="Am. J. Respir. Cell Mol. Biol.">
        <title>Trefoil factor family-peptides promote migration of human bronchial epithelial cells: synergistic effect with epidermal growth factor.</title>
        <authorList>
            <person name="Oertel M."/>
            <person name="Graness A."/>
            <person name="Thim L."/>
            <person name="Buhling F."/>
            <person name="Kalbacher H."/>
            <person name="Hoffmann W."/>
        </authorList>
    </citation>
    <scope>FUNCTION</scope>
</reference>
<reference key="13">
    <citation type="journal article" date="1977" name="Biochim. Biophys. Acta">
        <title>Incorporation of mannose and glucose into prenylphosphate sugars in isolated human platelet membranes.</title>
        <authorList>
            <person name="De Luca S."/>
        </authorList>
    </citation>
    <scope>STRUCTURE BY NMR OF 22-80</scope>
</reference>
<reference key="14">
    <citation type="journal article" date="2003" name="Biochemistry">
        <title>Solution structure of the disulfide-linked dimer of human intestinal trefoil factor (TFF3): the intermolecular orientation and interactions are markedly different from those of other dimeric trefoil proteins.</title>
        <authorList>
            <person name="Muskett F.W."/>
            <person name="May F.E."/>
            <person name="Westley B.R."/>
            <person name="Feeney J."/>
        </authorList>
    </citation>
    <scope>STRUCTURE BY NMR OF 22-80</scope>
    <scope>SUBUNIT</scope>
</reference>
<sequence>MAARALCMLGLVLALLSSSSAEEYVGLSANQCAVPAKDRVDCGYPHVTPKECNNRGCCFDSRIPGVPWCFKPLQEAECTF</sequence>
<keyword id="KW-0002">3D-structure</keyword>
<keyword id="KW-0963">Cytoplasm</keyword>
<keyword id="KW-0903">Direct protein sequencing</keyword>
<keyword id="KW-1015">Disulfide bond</keyword>
<keyword id="KW-0272">Extracellular matrix</keyword>
<keyword id="KW-1267">Proteomics identification</keyword>
<keyword id="KW-1185">Reference proteome</keyword>
<keyword id="KW-0964">Secreted</keyword>
<keyword id="KW-0732">Signal</keyword>
<gene>
    <name type="primary">TFF3</name>
    <name type="synonym">ITF</name>
    <name type="synonym">TFI</name>
</gene>
<proteinExistence type="evidence at protein level"/>
<comment type="function">
    <text evidence="3">Involved in the maintenance and repair of the intestinal mucosa. Promotes the mobility of epithelial cells in healing processes (motogen).</text>
</comment>
<comment type="subunit">
    <text evidence="4">Monomer. Homodimer; disulfide-linked.</text>
</comment>
<comment type="interaction">
    <interactant intactId="EBI-10224676">
        <id>Q07654</id>
    </interactant>
    <interactant intactId="EBI-2869882">
        <id>Q9Y6R7</id>
        <label>FCGBP</label>
    </interactant>
    <organismsDiffer>false</organismsDiffer>
    <experiments>2</experiments>
</comment>
<comment type="interaction">
    <interactant intactId="EBI-10224676">
        <id>Q07654</id>
    </interactant>
    <interactant intactId="EBI-740475">
        <id>P61457</id>
        <label>PCBD1</label>
    </interactant>
    <organismsDiffer>false</organismsDiffer>
    <experiments>6</experiments>
</comment>
<comment type="interaction">
    <interactant intactId="EBI-10224676">
        <id>Q07654</id>
    </interactant>
    <interactant intactId="EBI-347996">
        <id>O43765</id>
        <label>SGTA</label>
    </interactant>
    <organismsDiffer>false</organismsDiffer>
    <experiments>3</experiments>
</comment>
<comment type="interaction">
    <interactant intactId="EBI-10224676">
        <id>Q07654</id>
    </interactant>
    <interactant intactId="EBI-10224676">
        <id>Q07654</id>
        <label>TFF3</label>
    </interactant>
    <organismsDiffer>false</organismsDiffer>
    <experiments>2</experiments>
</comment>
<comment type="interaction">
    <interactant intactId="EBI-10224676">
        <id>Q07654</id>
    </interactant>
    <interactant intactId="EBI-947187">
        <id>Q9UHD9</id>
        <label>UBQLN2</label>
    </interactant>
    <organismsDiffer>false</organismsDiffer>
    <experiments>3</experiments>
</comment>
<comment type="subcellular location">
    <subcellularLocation>
        <location evidence="8">Secreted</location>
        <location evidence="8">Extracellular space</location>
        <location evidence="8">Extracellular matrix</location>
    </subcellularLocation>
    <subcellularLocation>
        <location evidence="2 8">Cytoplasm</location>
    </subcellularLocation>
</comment>
<comment type="tissue specificity">
    <text evidence="7 8">Expressed in goblet cells of the intestines and colon (at protein level). Expressed by goblet cells of small and large intestinal epithelia and also by the uterus. Also expressed in the hypothalamus where it is detected in paraventricular, periventricular and supraoptic nuclei (at protein level).</text>
</comment>
<comment type="sequence caution" evidence="9">
    <conflict type="erroneous initiation">
        <sequence resource="EMBL-CDS" id="AAA36766"/>
    </conflict>
    <text>Truncated N-terminus.</text>
</comment>
<comment type="sequence caution" evidence="9">
    <conflict type="erroneous initiation">
        <sequence resource="EMBL-CDS" id="AAH17859"/>
    </conflict>
    <text>Truncated N-terminus.</text>
</comment>
<comment type="sequence caution" evidence="9">
    <conflict type="erroneous initiation">
        <sequence resource="EMBL-CDS" id="AAL28111"/>
    </conflict>
    <text>Extended N-terminus.</text>
</comment>
<comment type="sequence caution" evidence="9">
    <conflict type="erroneous initiation">
        <sequence resource="EMBL-CDS" id="BAA95531"/>
    </conflict>
    <text>Truncated N-terminus.</text>
</comment>
<comment type="sequence caution" evidence="9">
    <conflict type="erroneous initiation">
        <sequence resource="EMBL-CDS" id="BAB13731"/>
    </conflict>
    <text>Truncated N-terminus.</text>
</comment>
<comment type="online information" name="Atlas of Genetics and Cytogenetics in Oncology and Haematology">
    <link uri="https://atlasgeneticsoncology.org/gene/265/TFF3"/>
</comment>
<feature type="signal peptide" evidence="5 6">
    <location>
        <begin position="1"/>
        <end position="21"/>
    </location>
</feature>
<feature type="chain" id="PRO_0000023465" description="Trefoil factor 3">
    <location>
        <begin position="22"/>
        <end position="80"/>
    </location>
</feature>
<feature type="domain" description="P-type" evidence="1">
    <location>
        <begin position="30"/>
        <end position="73"/>
    </location>
</feature>
<feature type="disulfide bond" evidence="1">
    <location>
        <begin position="32"/>
        <end position="58"/>
    </location>
</feature>
<feature type="disulfide bond" evidence="1">
    <location>
        <begin position="42"/>
        <end position="57"/>
    </location>
</feature>
<feature type="disulfide bond" evidence="1">
    <location>
        <begin position="52"/>
        <end position="69"/>
    </location>
</feature>
<feature type="disulfide bond" description="Interchain">
    <location>
        <position position="78"/>
    </location>
</feature>
<feature type="sequence conflict" description="In Ref. 7; AAA36766." evidence="9" ref="7">
    <original>QEA</original>
    <variation>TRKT</variation>
    <location>
        <begin position="74"/>
        <end position="76"/>
    </location>
</feature>
<feature type="helix" evidence="12">
    <location>
        <begin position="30"/>
        <end position="32"/>
    </location>
</feature>
<feature type="strand" evidence="11">
    <location>
        <begin position="36"/>
        <end position="39"/>
    </location>
</feature>
<feature type="turn" evidence="10">
    <location>
        <begin position="49"/>
        <end position="51"/>
    </location>
</feature>
<feature type="helix" evidence="12">
    <location>
        <begin position="53"/>
        <end position="55"/>
    </location>
</feature>
<feature type="strand" evidence="10">
    <location>
        <begin position="56"/>
        <end position="58"/>
    </location>
</feature>
<feature type="strand" evidence="10">
    <location>
        <begin position="64"/>
        <end position="66"/>
    </location>
</feature>
<feature type="strand" evidence="12">
    <location>
        <begin position="68"/>
        <end position="71"/>
    </location>
</feature>
<feature type="helix" evidence="11">
    <location>
        <begin position="74"/>
        <end position="76"/>
    </location>
</feature>
<feature type="turn" evidence="11">
    <location>
        <begin position="77"/>
        <end position="79"/>
    </location>
</feature>
<accession>Q07654</accession>
<accession>A0A0A6YYJ4</accession>
<accession>E9PBB5</accession>
<accession>Q96NX0</accession>
<accession>Q9UDA5</accession>
<dbReference type="EMBL" id="U25657">
    <property type="protein sequence ID" value="AAA83628.1"/>
    <property type="molecule type" value="Genomic_DNA"/>
</dbReference>
<dbReference type="EMBL" id="U25654">
    <property type="protein sequence ID" value="AAA83628.1"/>
    <property type="status" value="JOINED"/>
    <property type="molecule type" value="Genomic_DNA"/>
</dbReference>
<dbReference type="EMBL" id="U25656">
    <property type="protein sequence ID" value="AAA83628.1"/>
    <property type="status" value="JOINED"/>
    <property type="molecule type" value="Genomic_DNA"/>
</dbReference>
<dbReference type="EMBL" id="AB038162">
    <property type="protein sequence ID" value="BAB13731.1"/>
    <property type="status" value="ALT_INIT"/>
    <property type="molecule type" value="Genomic_DNA"/>
</dbReference>
<dbReference type="EMBL" id="AP001746">
    <property type="protein sequence ID" value="BAA95531.1"/>
    <property type="status" value="ALT_INIT"/>
    <property type="molecule type" value="Genomic_DNA"/>
</dbReference>
<dbReference type="EMBL" id="AP001623">
    <property type="status" value="NOT_ANNOTATED_CDS"/>
    <property type="molecule type" value="Genomic_DNA"/>
</dbReference>
<dbReference type="EMBL" id="AF432265">
    <property type="protein sequence ID" value="AAL28111.1"/>
    <property type="status" value="ALT_INIT"/>
    <property type="molecule type" value="mRNA"/>
</dbReference>
<dbReference type="EMBL" id="L15203">
    <property type="protein sequence ID" value="AAA59981.1"/>
    <property type="molecule type" value="mRNA"/>
</dbReference>
<dbReference type="EMBL" id="BC017859">
    <property type="protein sequence ID" value="AAH17859.1"/>
    <property type="status" value="ALT_INIT"/>
    <property type="molecule type" value="mRNA"/>
</dbReference>
<dbReference type="EMBL" id="L08044">
    <property type="protein sequence ID" value="AAA36766.1"/>
    <property type="status" value="ALT_INIT"/>
    <property type="molecule type" value="mRNA"/>
</dbReference>
<dbReference type="CCDS" id="CCDS33565.3"/>
<dbReference type="PIR" id="A48284">
    <property type="entry name" value="A48284"/>
</dbReference>
<dbReference type="RefSeq" id="NP_003217.3">
    <property type="nucleotide sequence ID" value="NM_003226.3"/>
</dbReference>
<dbReference type="PDB" id="1E9T">
    <property type="method" value="NMR"/>
    <property type="chains" value="A=22-80"/>
</dbReference>
<dbReference type="PDB" id="1PE3">
    <property type="method" value="NMR"/>
    <property type="chains" value="1/2=22-80"/>
</dbReference>
<dbReference type="PDB" id="6V1C">
    <property type="method" value="X-ray"/>
    <property type="resolution" value="1.55 A"/>
    <property type="chains" value="A=22-79"/>
</dbReference>
<dbReference type="PDBsum" id="1E9T"/>
<dbReference type="PDBsum" id="1PE3"/>
<dbReference type="PDBsum" id="6V1C"/>
<dbReference type="SMR" id="Q07654"/>
<dbReference type="BioGRID" id="112891">
    <property type="interactions" value="6"/>
</dbReference>
<dbReference type="FunCoup" id="Q07654">
    <property type="interactions" value="264"/>
</dbReference>
<dbReference type="IntAct" id="Q07654">
    <property type="interactions" value="4"/>
</dbReference>
<dbReference type="STRING" id="9606.ENSP00000430690"/>
<dbReference type="UniLectin" id="Q07654"/>
<dbReference type="GlyGen" id="Q07654">
    <property type="glycosylation" value="1 site"/>
</dbReference>
<dbReference type="BioMuta" id="TFF3"/>
<dbReference type="DMDM" id="585328"/>
<dbReference type="jPOST" id="Q07654"/>
<dbReference type="MassIVE" id="Q07654"/>
<dbReference type="PaxDb" id="9606-ENSP00000430690"/>
<dbReference type="PeptideAtlas" id="Q07654"/>
<dbReference type="ProteomicsDB" id="19187"/>
<dbReference type="ProteomicsDB" id="58522"/>
<dbReference type="Antibodypedia" id="23776">
    <property type="antibodies" value="474 antibodies from 33 providers"/>
</dbReference>
<dbReference type="DNASU" id="7033"/>
<dbReference type="Ensembl" id="ENST00000518498.3">
    <property type="protein sequence ID" value="ENSP00000430690.2"/>
    <property type="gene ID" value="ENSG00000160180.17"/>
</dbReference>
<dbReference type="GeneID" id="7033"/>
<dbReference type="KEGG" id="hsa:7033"/>
<dbReference type="MANE-Select" id="ENST00000518498.3">
    <property type="protein sequence ID" value="ENSP00000430690.2"/>
    <property type="RefSeq nucleotide sequence ID" value="NM_003226.4"/>
    <property type="RefSeq protein sequence ID" value="NP_003217.4"/>
</dbReference>
<dbReference type="AGR" id="HGNC:11757"/>
<dbReference type="CTD" id="7033"/>
<dbReference type="DisGeNET" id="7033"/>
<dbReference type="GeneCards" id="TFF3"/>
<dbReference type="HGNC" id="HGNC:11757">
    <property type="gene designation" value="TFF3"/>
</dbReference>
<dbReference type="HPA" id="ENSG00000160180">
    <property type="expression patterns" value="Tissue enhanced (cervix, intestine, salivary gland, thyroid gland)"/>
</dbReference>
<dbReference type="MIM" id="600633">
    <property type="type" value="gene"/>
</dbReference>
<dbReference type="neXtProt" id="NX_Q07654"/>
<dbReference type="OpenTargets" id="ENSG00000160180"/>
<dbReference type="PharmGKB" id="PA36472"/>
<dbReference type="VEuPathDB" id="HostDB:ENSG00000160180"/>
<dbReference type="eggNOG" id="ENOG502SV7V">
    <property type="taxonomic scope" value="Eukaryota"/>
</dbReference>
<dbReference type="GeneTree" id="ENSGT00940000162416"/>
<dbReference type="InParanoid" id="Q07654"/>
<dbReference type="PAN-GO" id="Q07654">
    <property type="GO annotations" value="2 GO annotations based on evolutionary models"/>
</dbReference>
<dbReference type="PhylomeDB" id="Q07654"/>
<dbReference type="TreeFam" id="TF336092"/>
<dbReference type="PathwayCommons" id="Q07654"/>
<dbReference type="Reactome" id="R-HSA-9018519">
    <property type="pathway name" value="Estrogen-dependent gene expression"/>
</dbReference>
<dbReference type="SignaLink" id="Q07654"/>
<dbReference type="SIGNOR" id="Q07654"/>
<dbReference type="BioGRID-ORCS" id="7033">
    <property type="hits" value="10 hits in 1149 CRISPR screens"/>
</dbReference>
<dbReference type="ChiTaRS" id="TFF3">
    <property type="organism name" value="human"/>
</dbReference>
<dbReference type="EvolutionaryTrace" id="Q07654"/>
<dbReference type="GeneWiki" id="Trefoil_factor_3"/>
<dbReference type="GenomeRNAi" id="7033"/>
<dbReference type="Pharos" id="Q07654">
    <property type="development level" value="Tbio"/>
</dbReference>
<dbReference type="PRO" id="PR:Q07654"/>
<dbReference type="Proteomes" id="UP000005640">
    <property type="component" value="Chromosome 21"/>
</dbReference>
<dbReference type="RNAct" id="Q07654">
    <property type="molecule type" value="protein"/>
</dbReference>
<dbReference type="Bgee" id="ENSG00000160180">
    <property type="expression patterns" value="Expressed in mucosa of transverse colon and 123 other cell types or tissues"/>
</dbReference>
<dbReference type="ExpressionAtlas" id="Q07654">
    <property type="expression patterns" value="baseline and differential"/>
</dbReference>
<dbReference type="GO" id="GO:0005576">
    <property type="term" value="C:extracellular region"/>
    <property type="evidence" value="ECO:0000314"/>
    <property type="project" value="GO_Central"/>
</dbReference>
<dbReference type="GO" id="GO:0005615">
    <property type="term" value="C:extracellular space"/>
    <property type="evidence" value="ECO:0000318"/>
    <property type="project" value="GO_Central"/>
</dbReference>
<dbReference type="GO" id="GO:0030141">
    <property type="term" value="C:secretory granule"/>
    <property type="evidence" value="ECO:0007669"/>
    <property type="project" value="Ensembl"/>
</dbReference>
<dbReference type="GO" id="GO:0042802">
    <property type="term" value="F:identical protein binding"/>
    <property type="evidence" value="ECO:0000353"/>
    <property type="project" value="IntAct"/>
</dbReference>
<dbReference type="GO" id="GO:0030277">
    <property type="term" value="P:maintenance of gastrointestinal epithelium"/>
    <property type="evidence" value="ECO:0000318"/>
    <property type="project" value="GO_Central"/>
</dbReference>
<dbReference type="GO" id="GO:0010906">
    <property type="term" value="P:regulation of glucose metabolic process"/>
    <property type="evidence" value="ECO:0007669"/>
    <property type="project" value="Ensembl"/>
</dbReference>
<dbReference type="CDD" id="cd00111">
    <property type="entry name" value="Trefoil"/>
    <property type="match status" value="1"/>
</dbReference>
<dbReference type="FunFam" id="4.10.110.10:FF:000001">
    <property type="entry name" value="Trefoil factor 3"/>
    <property type="match status" value="1"/>
</dbReference>
<dbReference type="Gene3D" id="4.10.110.10">
    <property type="entry name" value="Spasmolytic Protein, domain 1"/>
    <property type="match status" value="1"/>
</dbReference>
<dbReference type="InterPro" id="IPR017994">
    <property type="entry name" value="P_trefoil_chordata"/>
</dbReference>
<dbReference type="InterPro" id="IPR017957">
    <property type="entry name" value="P_trefoil_CS"/>
</dbReference>
<dbReference type="InterPro" id="IPR000519">
    <property type="entry name" value="P_trefoil_dom"/>
</dbReference>
<dbReference type="InterPro" id="IPR044913">
    <property type="entry name" value="P_trefoil_dom_sf"/>
</dbReference>
<dbReference type="PANTHER" id="PTHR13826">
    <property type="entry name" value="INTESTINAL TREFOIL FACTOR-RELATED"/>
    <property type="match status" value="1"/>
</dbReference>
<dbReference type="PANTHER" id="PTHR13826:SF16">
    <property type="entry name" value="TREFOIL FACTOR 3"/>
    <property type="match status" value="1"/>
</dbReference>
<dbReference type="Pfam" id="PF00088">
    <property type="entry name" value="Trefoil"/>
    <property type="match status" value="1"/>
</dbReference>
<dbReference type="PRINTS" id="PR00680">
    <property type="entry name" value="PTREFOIL"/>
</dbReference>
<dbReference type="SMART" id="SM00018">
    <property type="entry name" value="PD"/>
    <property type="match status" value="1"/>
</dbReference>
<dbReference type="SUPFAM" id="SSF57492">
    <property type="entry name" value="Trefoil"/>
    <property type="match status" value="1"/>
</dbReference>
<dbReference type="PROSITE" id="PS00025">
    <property type="entry name" value="P_TREFOIL_1"/>
    <property type="match status" value="1"/>
</dbReference>
<dbReference type="PROSITE" id="PS51448">
    <property type="entry name" value="P_TREFOIL_2"/>
    <property type="match status" value="1"/>
</dbReference>
<protein>
    <recommendedName>
        <fullName>Trefoil factor 3</fullName>
    </recommendedName>
    <alternativeName>
        <fullName>Intestinal trefoil factor</fullName>
        <shortName>hITF</shortName>
    </alternativeName>
    <alternativeName>
        <fullName>Polypeptide P1.B</fullName>
        <shortName>hP1.B</shortName>
    </alternativeName>
</protein>
<evidence type="ECO:0000255" key="1">
    <source>
        <dbReference type="PROSITE-ProRule" id="PRU00779"/>
    </source>
</evidence>
<evidence type="ECO:0000269" key="2">
    <source>
    </source>
</evidence>
<evidence type="ECO:0000269" key="3">
    <source>
    </source>
</evidence>
<evidence type="ECO:0000269" key="4">
    <source>
    </source>
</evidence>
<evidence type="ECO:0000269" key="5">
    <source>
    </source>
</evidence>
<evidence type="ECO:0000269" key="6">
    <source>
    </source>
</evidence>
<evidence type="ECO:0000269" key="7">
    <source>
    </source>
</evidence>
<evidence type="ECO:0000269" key="8">
    <source>
    </source>
</evidence>
<evidence type="ECO:0000305" key="9"/>
<evidence type="ECO:0007829" key="10">
    <source>
        <dbReference type="PDB" id="1E9T"/>
    </source>
</evidence>
<evidence type="ECO:0007829" key="11">
    <source>
        <dbReference type="PDB" id="1PE3"/>
    </source>
</evidence>
<evidence type="ECO:0007829" key="12">
    <source>
        <dbReference type="PDB" id="6V1C"/>
    </source>
</evidence>
<name>TFF3_HUMAN</name>